<keyword id="KW-0413">Isomerase</keyword>
<keyword id="KW-0663">Pyridoxal phosphate</keyword>
<keyword id="KW-1185">Reference proteome</keyword>
<accession>Q5H522</accession>
<organism>
    <name type="scientific">Xanthomonas oryzae pv. oryzae (strain KACC10331 / KXO85)</name>
    <dbReference type="NCBI Taxonomy" id="291331"/>
    <lineage>
        <taxon>Bacteria</taxon>
        <taxon>Pseudomonadati</taxon>
        <taxon>Pseudomonadota</taxon>
        <taxon>Gammaproteobacteria</taxon>
        <taxon>Lysobacterales</taxon>
        <taxon>Lysobacteraceae</taxon>
        <taxon>Xanthomonas</taxon>
    </lineage>
</organism>
<protein>
    <recommendedName>
        <fullName evidence="1">Alanine racemase</fullName>
        <ecNumber evidence="1">5.1.1.1</ecNumber>
    </recommendedName>
</protein>
<feature type="chain" id="PRO_1000066065" description="Alanine racemase">
    <location>
        <begin position="1"/>
        <end position="366"/>
    </location>
</feature>
<feature type="active site" description="Proton acceptor; specific for D-alanine" evidence="1">
    <location>
        <position position="33"/>
    </location>
</feature>
<feature type="active site" description="Proton acceptor; specific for L-alanine" evidence="1">
    <location>
        <position position="253"/>
    </location>
</feature>
<feature type="binding site" evidence="1">
    <location>
        <position position="129"/>
    </location>
    <ligand>
        <name>substrate</name>
    </ligand>
</feature>
<feature type="binding site" evidence="1">
    <location>
        <position position="301"/>
    </location>
    <ligand>
        <name>substrate</name>
    </ligand>
</feature>
<feature type="modified residue" description="N6-(pyridoxal phosphate)lysine" evidence="1">
    <location>
        <position position="33"/>
    </location>
</feature>
<sequence>MRPAQASIDLEALRHNYRLAKRLGGSKALAVVKADAYGHGAVPCAQALEPEADGFAVACIEEALELRQAGIRAPILLLEGFFEHDELRLIAEHDLWTVAATPQQVRALAAFQSPRPLRVWLKMDSGMHRLGLSPEDFRAAWLRLRGLPQIASLVLMTHLARADELDCSRTDEQAVAFALTAGGMRAETSLRNSPGLLGWPALRNDWSRPGLMLYGANPFPQDTENTAQLRPVMTLRSRIILVRDLPVGEPVGYGARFVAERPTRVGVVAMGYADGYPQFAPNGTPVLVDGQVCPLIGRVSMDMLTVDLTDHPQADIGATVQLWGQAPRVGPLATQCNVSAYQLLCGLKRLPRTYVGSAAVGEVAAR</sequence>
<gene>
    <name type="primary">alr</name>
    <name type="ordered locus">XOO0694</name>
</gene>
<comment type="function">
    <text evidence="1">Catalyzes the interconversion of L-alanine and D-alanine. May also act on other amino acids.</text>
</comment>
<comment type="catalytic activity">
    <reaction evidence="1">
        <text>L-alanine = D-alanine</text>
        <dbReference type="Rhea" id="RHEA:20249"/>
        <dbReference type="ChEBI" id="CHEBI:57416"/>
        <dbReference type="ChEBI" id="CHEBI:57972"/>
        <dbReference type="EC" id="5.1.1.1"/>
    </reaction>
</comment>
<comment type="cofactor">
    <cofactor evidence="1">
        <name>pyridoxal 5'-phosphate</name>
        <dbReference type="ChEBI" id="CHEBI:597326"/>
    </cofactor>
</comment>
<comment type="pathway">
    <text evidence="1">Amino-acid biosynthesis; D-alanine biosynthesis; D-alanine from L-alanine: step 1/1.</text>
</comment>
<comment type="similarity">
    <text evidence="1">Belongs to the alanine racemase family.</text>
</comment>
<reference key="1">
    <citation type="journal article" date="2005" name="Nucleic Acids Res.">
        <title>The genome sequence of Xanthomonas oryzae pathovar oryzae KACC10331, the bacterial blight pathogen of rice.</title>
        <authorList>
            <person name="Lee B.-M."/>
            <person name="Park Y.-J."/>
            <person name="Park D.-S."/>
            <person name="Kang H.-W."/>
            <person name="Kim J.-G."/>
            <person name="Song E.-S."/>
            <person name="Park I.-C."/>
            <person name="Yoon U.-H."/>
            <person name="Hahn J.-H."/>
            <person name="Koo B.-S."/>
            <person name="Lee G.-B."/>
            <person name="Kim H."/>
            <person name="Park H.-S."/>
            <person name="Yoon K.-O."/>
            <person name="Kim J.-H."/>
            <person name="Jung C.-H."/>
            <person name="Koh N.-H."/>
            <person name="Seo J.-S."/>
            <person name="Go S.-J."/>
        </authorList>
    </citation>
    <scope>NUCLEOTIDE SEQUENCE [LARGE SCALE GENOMIC DNA]</scope>
    <source>
        <strain>KACC10331 / KXO85</strain>
    </source>
</reference>
<dbReference type="EC" id="5.1.1.1" evidence="1"/>
<dbReference type="EMBL" id="AE013598">
    <property type="protein sequence ID" value="AAW73948.1"/>
    <property type="molecule type" value="Genomic_DNA"/>
</dbReference>
<dbReference type="SMR" id="Q5H522"/>
<dbReference type="STRING" id="291331.XOO0694"/>
<dbReference type="KEGG" id="xoo:XOO0694"/>
<dbReference type="PATRIC" id="fig|291331.8.peg.779"/>
<dbReference type="HOGENOM" id="CLU_028393_1_0_6"/>
<dbReference type="UniPathway" id="UPA00042">
    <property type="reaction ID" value="UER00497"/>
</dbReference>
<dbReference type="Proteomes" id="UP000006735">
    <property type="component" value="Chromosome"/>
</dbReference>
<dbReference type="GO" id="GO:0005829">
    <property type="term" value="C:cytosol"/>
    <property type="evidence" value="ECO:0007669"/>
    <property type="project" value="TreeGrafter"/>
</dbReference>
<dbReference type="GO" id="GO:0008784">
    <property type="term" value="F:alanine racemase activity"/>
    <property type="evidence" value="ECO:0007669"/>
    <property type="project" value="UniProtKB-UniRule"/>
</dbReference>
<dbReference type="GO" id="GO:0030170">
    <property type="term" value="F:pyridoxal phosphate binding"/>
    <property type="evidence" value="ECO:0007669"/>
    <property type="project" value="UniProtKB-UniRule"/>
</dbReference>
<dbReference type="GO" id="GO:0030632">
    <property type="term" value="P:D-alanine biosynthetic process"/>
    <property type="evidence" value="ECO:0007669"/>
    <property type="project" value="UniProtKB-UniRule"/>
</dbReference>
<dbReference type="CDD" id="cd06827">
    <property type="entry name" value="PLPDE_III_AR_proteobact"/>
    <property type="match status" value="1"/>
</dbReference>
<dbReference type="FunFam" id="2.40.37.10:FF:000002">
    <property type="entry name" value="Alanine racemase"/>
    <property type="match status" value="1"/>
</dbReference>
<dbReference type="FunFam" id="3.20.20.10:FF:000002">
    <property type="entry name" value="Alanine racemase"/>
    <property type="match status" value="1"/>
</dbReference>
<dbReference type="Gene3D" id="3.20.20.10">
    <property type="entry name" value="Alanine racemase"/>
    <property type="match status" value="1"/>
</dbReference>
<dbReference type="Gene3D" id="2.40.37.10">
    <property type="entry name" value="Lyase, Ornithine Decarboxylase, Chain A, domain 1"/>
    <property type="match status" value="1"/>
</dbReference>
<dbReference type="HAMAP" id="MF_01201">
    <property type="entry name" value="Ala_racemase"/>
    <property type="match status" value="1"/>
</dbReference>
<dbReference type="InterPro" id="IPR000821">
    <property type="entry name" value="Ala_racemase"/>
</dbReference>
<dbReference type="InterPro" id="IPR009006">
    <property type="entry name" value="Ala_racemase/Decarboxylase_C"/>
</dbReference>
<dbReference type="InterPro" id="IPR011079">
    <property type="entry name" value="Ala_racemase_C"/>
</dbReference>
<dbReference type="InterPro" id="IPR001608">
    <property type="entry name" value="Ala_racemase_N"/>
</dbReference>
<dbReference type="InterPro" id="IPR020622">
    <property type="entry name" value="Ala_racemase_pyridoxalP-BS"/>
</dbReference>
<dbReference type="InterPro" id="IPR029066">
    <property type="entry name" value="PLP-binding_barrel"/>
</dbReference>
<dbReference type="NCBIfam" id="TIGR00492">
    <property type="entry name" value="alr"/>
    <property type="match status" value="1"/>
</dbReference>
<dbReference type="PANTHER" id="PTHR30511">
    <property type="entry name" value="ALANINE RACEMASE"/>
    <property type="match status" value="1"/>
</dbReference>
<dbReference type="PANTHER" id="PTHR30511:SF0">
    <property type="entry name" value="ALANINE RACEMASE, CATABOLIC-RELATED"/>
    <property type="match status" value="1"/>
</dbReference>
<dbReference type="Pfam" id="PF00842">
    <property type="entry name" value="Ala_racemase_C"/>
    <property type="match status" value="1"/>
</dbReference>
<dbReference type="Pfam" id="PF01168">
    <property type="entry name" value="Ala_racemase_N"/>
    <property type="match status" value="1"/>
</dbReference>
<dbReference type="PRINTS" id="PR00992">
    <property type="entry name" value="ALARACEMASE"/>
</dbReference>
<dbReference type="SMART" id="SM01005">
    <property type="entry name" value="Ala_racemase_C"/>
    <property type="match status" value="1"/>
</dbReference>
<dbReference type="SUPFAM" id="SSF50621">
    <property type="entry name" value="Alanine racemase C-terminal domain-like"/>
    <property type="match status" value="1"/>
</dbReference>
<dbReference type="SUPFAM" id="SSF51419">
    <property type="entry name" value="PLP-binding barrel"/>
    <property type="match status" value="1"/>
</dbReference>
<dbReference type="PROSITE" id="PS00395">
    <property type="entry name" value="ALANINE_RACEMASE"/>
    <property type="match status" value="1"/>
</dbReference>
<proteinExistence type="inferred from homology"/>
<evidence type="ECO:0000255" key="1">
    <source>
        <dbReference type="HAMAP-Rule" id="MF_01201"/>
    </source>
</evidence>
<name>ALR_XANOR</name>